<sequence length="100" mass="11771">MARKSLIQRERKRQKLEQKYHLIRRSLKKEISKTPSLSDKWKIHGKLQSPPRNSAPIRLHRRCFSTGRPRANYRDFGLSGHVLREMVHACLLPGATRSSW</sequence>
<name>RR14_AMBTC</name>
<evidence type="ECO:0000255" key="1">
    <source>
        <dbReference type="HAMAP-Rule" id="MF_00537"/>
    </source>
</evidence>
<evidence type="ECO:0000305" key="2"/>
<accession>Q70Y05</accession>
<proteinExistence type="inferred from homology"/>
<reference key="1">
    <citation type="journal article" date="2003" name="Mol. Biol. Evol.">
        <title>Analysis of the Amborella trichopoda chloroplast genome sequence suggests that Amborella is not a basal angiosperm.</title>
        <authorList>
            <person name="Goremykin V.V."/>
            <person name="Hirsch-Ernst K.I."/>
            <person name="Wolfl S."/>
            <person name="Hellwig F.H."/>
        </authorList>
    </citation>
    <scope>NUCLEOTIDE SEQUENCE [LARGE SCALE GENOMIC DNA]</scope>
</reference>
<keyword id="KW-0150">Chloroplast</keyword>
<keyword id="KW-0934">Plastid</keyword>
<keyword id="KW-1185">Reference proteome</keyword>
<keyword id="KW-0687">Ribonucleoprotein</keyword>
<keyword id="KW-0689">Ribosomal protein</keyword>
<keyword id="KW-0694">RNA-binding</keyword>
<keyword id="KW-0699">rRNA-binding</keyword>
<protein>
    <recommendedName>
        <fullName evidence="1">Small ribosomal subunit protein uS14c</fullName>
    </recommendedName>
    <alternativeName>
        <fullName evidence="2">30S ribosomal protein S14, chloroplastic</fullName>
    </alternativeName>
</protein>
<geneLocation type="chloroplast"/>
<gene>
    <name evidence="1" type="primary">rps14</name>
</gene>
<organism>
    <name type="scientific">Amborella trichopoda</name>
    <dbReference type="NCBI Taxonomy" id="13333"/>
    <lineage>
        <taxon>Eukaryota</taxon>
        <taxon>Viridiplantae</taxon>
        <taxon>Streptophyta</taxon>
        <taxon>Embryophyta</taxon>
        <taxon>Tracheophyta</taxon>
        <taxon>Spermatophyta</taxon>
        <taxon>Magnoliopsida</taxon>
        <taxon>Amborellales</taxon>
        <taxon>Amborellaceae</taxon>
        <taxon>Amborella</taxon>
    </lineage>
</organism>
<feature type="chain" id="PRO_0000275156" description="Small ribosomal subunit protein uS14c">
    <location>
        <begin position="1"/>
        <end position="100"/>
    </location>
</feature>
<dbReference type="EMBL" id="AJ506156">
    <property type="protein sequence ID" value="CAD45105.1"/>
    <property type="molecule type" value="Genomic_DNA"/>
</dbReference>
<dbReference type="RefSeq" id="NP_904097.1">
    <property type="nucleotide sequence ID" value="NC_005086.1"/>
</dbReference>
<dbReference type="SMR" id="Q70Y05"/>
<dbReference type="STRING" id="13333.Q70Y05"/>
<dbReference type="GeneID" id="2546607"/>
<dbReference type="KEGG" id="atr:2546607"/>
<dbReference type="OrthoDB" id="413436at2759"/>
<dbReference type="Proteomes" id="UP000017836">
    <property type="component" value="Chloroplast"/>
</dbReference>
<dbReference type="GO" id="GO:0009507">
    <property type="term" value="C:chloroplast"/>
    <property type="evidence" value="ECO:0007669"/>
    <property type="project" value="UniProtKB-SubCell"/>
</dbReference>
<dbReference type="GO" id="GO:0015935">
    <property type="term" value="C:small ribosomal subunit"/>
    <property type="evidence" value="ECO:0000318"/>
    <property type="project" value="GO_Central"/>
</dbReference>
<dbReference type="GO" id="GO:0019843">
    <property type="term" value="F:rRNA binding"/>
    <property type="evidence" value="ECO:0007669"/>
    <property type="project" value="UniProtKB-UniRule"/>
</dbReference>
<dbReference type="GO" id="GO:0003735">
    <property type="term" value="F:structural constituent of ribosome"/>
    <property type="evidence" value="ECO:0000318"/>
    <property type="project" value="GO_Central"/>
</dbReference>
<dbReference type="GO" id="GO:0006412">
    <property type="term" value="P:translation"/>
    <property type="evidence" value="ECO:0000318"/>
    <property type="project" value="GO_Central"/>
</dbReference>
<dbReference type="FunFam" id="1.10.287.1480:FF:000001">
    <property type="entry name" value="30S ribosomal protein S14"/>
    <property type="match status" value="1"/>
</dbReference>
<dbReference type="Gene3D" id="1.10.287.1480">
    <property type="match status" value="1"/>
</dbReference>
<dbReference type="HAMAP" id="MF_00537">
    <property type="entry name" value="Ribosomal_uS14_1"/>
    <property type="match status" value="1"/>
</dbReference>
<dbReference type="InterPro" id="IPR001209">
    <property type="entry name" value="Ribosomal_uS14"/>
</dbReference>
<dbReference type="InterPro" id="IPR023036">
    <property type="entry name" value="Ribosomal_uS14_bac/plastid"/>
</dbReference>
<dbReference type="InterPro" id="IPR018271">
    <property type="entry name" value="Ribosomal_uS14_CS"/>
</dbReference>
<dbReference type="NCBIfam" id="NF006477">
    <property type="entry name" value="PRK08881.1"/>
    <property type="match status" value="1"/>
</dbReference>
<dbReference type="PANTHER" id="PTHR19836">
    <property type="entry name" value="30S RIBOSOMAL PROTEIN S14"/>
    <property type="match status" value="1"/>
</dbReference>
<dbReference type="PANTHER" id="PTHR19836:SF19">
    <property type="entry name" value="SMALL RIBOSOMAL SUBUNIT PROTEIN US14M"/>
    <property type="match status" value="1"/>
</dbReference>
<dbReference type="Pfam" id="PF00253">
    <property type="entry name" value="Ribosomal_S14"/>
    <property type="match status" value="1"/>
</dbReference>
<dbReference type="SUPFAM" id="SSF57716">
    <property type="entry name" value="Glucocorticoid receptor-like (DNA-binding domain)"/>
    <property type="match status" value="1"/>
</dbReference>
<dbReference type="PROSITE" id="PS00527">
    <property type="entry name" value="RIBOSOMAL_S14"/>
    <property type="match status" value="1"/>
</dbReference>
<comment type="function">
    <text evidence="1">Binds 16S rRNA, required for the assembly of 30S particles.</text>
</comment>
<comment type="subunit">
    <text evidence="1">Part of the 30S ribosomal subunit.</text>
</comment>
<comment type="subcellular location">
    <subcellularLocation>
        <location>Plastid</location>
        <location>Chloroplast</location>
    </subcellularLocation>
</comment>
<comment type="similarity">
    <text evidence="1">Belongs to the universal ribosomal protein uS14 family.</text>
</comment>